<proteinExistence type="inferred from homology"/>
<name>RL20_NEIG1</name>
<dbReference type="EMBL" id="AE004969">
    <property type="protein sequence ID" value="AAW89046.1"/>
    <property type="molecule type" value="Genomic_DNA"/>
</dbReference>
<dbReference type="RefSeq" id="WP_002214103.1">
    <property type="nucleotide sequence ID" value="NC_002946.2"/>
</dbReference>
<dbReference type="RefSeq" id="YP_207458.1">
    <property type="nucleotide sequence ID" value="NC_002946.2"/>
</dbReference>
<dbReference type="SMR" id="Q5F9U1"/>
<dbReference type="STRING" id="242231.NGO_0298"/>
<dbReference type="GeneID" id="93386451"/>
<dbReference type="KEGG" id="ngo:NGO_0298"/>
<dbReference type="PATRIC" id="fig|242231.10.peg.369"/>
<dbReference type="HOGENOM" id="CLU_123265_0_1_4"/>
<dbReference type="PRO" id="PR:Q5F9U1"/>
<dbReference type="Proteomes" id="UP000000535">
    <property type="component" value="Chromosome"/>
</dbReference>
<dbReference type="GO" id="GO:1990904">
    <property type="term" value="C:ribonucleoprotein complex"/>
    <property type="evidence" value="ECO:0007669"/>
    <property type="project" value="UniProtKB-KW"/>
</dbReference>
<dbReference type="GO" id="GO:0005840">
    <property type="term" value="C:ribosome"/>
    <property type="evidence" value="ECO:0007669"/>
    <property type="project" value="UniProtKB-KW"/>
</dbReference>
<dbReference type="GO" id="GO:0019843">
    <property type="term" value="F:rRNA binding"/>
    <property type="evidence" value="ECO:0007669"/>
    <property type="project" value="UniProtKB-UniRule"/>
</dbReference>
<dbReference type="GO" id="GO:0003735">
    <property type="term" value="F:structural constituent of ribosome"/>
    <property type="evidence" value="ECO:0007669"/>
    <property type="project" value="InterPro"/>
</dbReference>
<dbReference type="GO" id="GO:0000027">
    <property type="term" value="P:ribosomal large subunit assembly"/>
    <property type="evidence" value="ECO:0007669"/>
    <property type="project" value="UniProtKB-UniRule"/>
</dbReference>
<dbReference type="GO" id="GO:0006412">
    <property type="term" value="P:translation"/>
    <property type="evidence" value="ECO:0007669"/>
    <property type="project" value="InterPro"/>
</dbReference>
<dbReference type="CDD" id="cd07026">
    <property type="entry name" value="Ribosomal_L20"/>
    <property type="match status" value="1"/>
</dbReference>
<dbReference type="FunFam" id="1.10.1900.20:FF:000001">
    <property type="entry name" value="50S ribosomal protein L20"/>
    <property type="match status" value="1"/>
</dbReference>
<dbReference type="Gene3D" id="6.10.160.10">
    <property type="match status" value="1"/>
</dbReference>
<dbReference type="Gene3D" id="1.10.1900.20">
    <property type="entry name" value="Ribosomal protein L20"/>
    <property type="match status" value="1"/>
</dbReference>
<dbReference type="HAMAP" id="MF_00382">
    <property type="entry name" value="Ribosomal_bL20"/>
    <property type="match status" value="1"/>
</dbReference>
<dbReference type="InterPro" id="IPR005813">
    <property type="entry name" value="Ribosomal_bL20"/>
</dbReference>
<dbReference type="InterPro" id="IPR049946">
    <property type="entry name" value="RIBOSOMAL_L20_CS"/>
</dbReference>
<dbReference type="InterPro" id="IPR035566">
    <property type="entry name" value="Ribosomal_protein_bL20_C"/>
</dbReference>
<dbReference type="NCBIfam" id="TIGR01032">
    <property type="entry name" value="rplT_bact"/>
    <property type="match status" value="1"/>
</dbReference>
<dbReference type="PANTHER" id="PTHR10986">
    <property type="entry name" value="39S RIBOSOMAL PROTEIN L20"/>
    <property type="match status" value="1"/>
</dbReference>
<dbReference type="Pfam" id="PF00453">
    <property type="entry name" value="Ribosomal_L20"/>
    <property type="match status" value="1"/>
</dbReference>
<dbReference type="PRINTS" id="PR00062">
    <property type="entry name" value="RIBOSOMALL20"/>
</dbReference>
<dbReference type="SUPFAM" id="SSF74731">
    <property type="entry name" value="Ribosomal protein L20"/>
    <property type="match status" value="1"/>
</dbReference>
<dbReference type="PROSITE" id="PS00937">
    <property type="entry name" value="RIBOSOMAL_L20"/>
    <property type="match status" value="1"/>
</dbReference>
<protein>
    <recommendedName>
        <fullName evidence="1">Large ribosomal subunit protein bL20</fullName>
    </recommendedName>
    <alternativeName>
        <fullName evidence="2">50S ribosomal protein L20</fullName>
    </alternativeName>
</protein>
<keyword id="KW-1185">Reference proteome</keyword>
<keyword id="KW-0687">Ribonucleoprotein</keyword>
<keyword id="KW-0689">Ribosomal protein</keyword>
<keyword id="KW-0694">RNA-binding</keyword>
<keyword id="KW-0699">rRNA-binding</keyword>
<accession>Q5F9U1</accession>
<evidence type="ECO:0000255" key="1">
    <source>
        <dbReference type="HAMAP-Rule" id="MF_00382"/>
    </source>
</evidence>
<evidence type="ECO:0000305" key="2"/>
<gene>
    <name evidence="1" type="primary">rplT</name>
    <name type="ordered locus">NGO_0298</name>
</gene>
<feature type="chain" id="PRO_0000243704" description="Large ribosomal subunit protein bL20">
    <location>
        <begin position="1"/>
        <end position="119"/>
    </location>
</feature>
<organism>
    <name type="scientific">Neisseria gonorrhoeae (strain ATCC 700825 / FA 1090)</name>
    <dbReference type="NCBI Taxonomy" id="242231"/>
    <lineage>
        <taxon>Bacteria</taxon>
        <taxon>Pseudomonadati</taxon>
        <taxon>Pseudomonadota</taxon>
        <taxon>Betaproteobacteria</taxon>
        <taxon>Neisseriales</taxon>
        <taxon>Neisseriaceae</taxon>
        <taxon>Neisseria</taxon>
    </lineage>
</organism>
<sequence length="119" mass="13680">MPRVKRGVTARARHQKIFALAKGYRGRRKNVYRVAKQAVMKAGQYAYRDRRQRKRQFRQLWIVRINAGARENGLSYSKFMNGLKRASIEIDRKVLADLAVFDKAAFAQLVEKAKAALAA</sequence>
<reference key="1">
    <citation type="submission" date="2003-03" db="EMBL/GenBank/DDBJ databases">
        <title>The complete genome sequence of Neisseria gonorrhoeae.</title>
        <authorList>
            <person name="Lewis L.A."/>
            <person name="Gillaspy A.F."/>
            <person name="McLaughlin R.E."/>
            <person name="Gipson M."/>
            <person name="Ducey T.F."/>
            <person name="Ownbey T."/>
            <person name="Hartman K."/>
            <person name="Nydick C."/>
            <person name="Carson M.B."/>
            <person name="Vaughn J."/>
            <person name="Thomson C."/>
            <person name="Song L."/>
            <person name="Lin S."/>
            <person name="Yuan X."/>
            <person name="Najar F."/>
            <person name="Zhan M."/>
            <person name="Ren Q."/>
            <person name="Zhu H."/>
            <person name="Qi S."/>
            <person name="Kenton S.M."/>
            <person name="Lai H."/>
            <person name="White J.D."/>
            <person name="Clifton S."/>
            <person name="Roe B.A."/>
            <person name="Dyer D.W."/>
        </authorList>
    </citation>
    <scope>NUCLEOTIDE SEQUENCE [LARGE SCALE GENOMIC DNA]</scope>
    <source>
        <strain>ATCC 700825 / FA 1090</strain>
    </source>
</reference>
<comment type="function">
    <text evidence="1">Binds directly to 23S ribosomal RNA and is necessary for the in vitro assembly process of the 50S ribosomal subunit. It is not involved in the protein synthesizing functions of that subunit.</text>
</comment>
<comment type="similarity">
    <text evidence="1">Belongs to the bacterial ribosomal protein bL20 family.</text>
</comment>